<evidence type="ECO:0000305" key="1"/>
<name>DNS2_BURP1</name>
<proteinExistence type="inferred from homology"/>
<accession>Q3JJK4</accession>
<reference key="1">
    <citation type="journal article" date="2010" name="Genome Biol. Evol.">
        <title>Continuing evolution of Burkholderia mallei through genome reduction and large-scale rearrangements.</title>
        <authorList>
            <person name="Losada L."/>
            <person name="Ronning C.M."/>
            <person name="DeShazer D."/>
            <person name="Woods D."/>
            <person name="Fedorova N."/>
            <person name="Kim H.S."/>
            <person name="Shabalina S.A."/>
            <person name="Pearson T.R."/>
            <person name="Brinkac L."/>
            <person name="Tan P."/>
            <person name="Nandi T."/>
            <person name="Crabtree J."/>
            <person name="Badger J."/>
            <person name="Beckstrom-Sternberg S."/>
            <person name="Saqib M."/>
            <person name="Schutzer S.E."/>
            <person name="Keim P."/>
            <person name="Nierman W.C."/>
        </authorList>
    </citation>
    <scope>NUCLEOTIDE SEQUENCE [LARGE SCALE GENOMIC DNA]</scope>
    <source>
        <strain>1710b</strain>
    </source>
</reference>
<gene>
    <name type="ordered locus">BURPS1710b_A1091</name>
</gene>
<comment type="miscellaneous">
    <text>Unlike their eukaryotic orthologs the putative Burkholderia deoxyribonuclease-2 are probably not secreted from the cell, as they do not have a signal sequence.</text>
</comment>
<comment type="similarity">
    <text evidence="1">Belongs to the DNase II family.</text>
</comment>
<dbReference type="EC" id="3.1.-.-"/>
<dbReference type="EMBL" id="CP000125">
    <property type="protein sequence ID" value="ABA51955.1"/>
    <property type="molecule type" value="Genomic_DNA"/>
</dbReference>
<dbReference type="RefSeq" id="WP_004524950.1">
    <property type="nucleotide sequence ID" value="NC_007435.1"/>
</dbReference>
<dbReference type="SMR" id="Q3JJK4"/>
<dbReference type="EnsemblBacteria" id="ABA51955">
    <property type="protein sequence ID" value="ABA51955"/>
    <property type="gene ID" value="BURPS1710b_A1091"/>
</dbReference>
<dbReference type="KEGG" id="bpm:BURPS1710b_A1091"/>
<dbReference type="HOGENOM" id="CLU_053867_0_0_4"/>
<dbReference type="Proteomes" id="UP000002700">
    <property type="component" value="Chromosome II"/>
</dbReference>
<dbReference type="GO" id="GO:0004531">
    <property type="term" value="F:deoxyribonuclease II activity"/>
    <property type="evidence" value="ECO:0007669"/>
    <property type="project" value="InterPro"/>
</dbReference>
<dbReference type="CDD" id="cd09120">
    <property type="entry name" value="PLDc_DNaseII_1"/>
    <property type="match status" value="1"/>
</dbReference>
<dbReference type="CDD" id="cd09121">
    <property type="entry name" value="PLDc_DNaseII_2"/>
    <property type="match status" value="1"/>
</dbReference>
<dbReference type="InterPro" id="IPR004947">
    <property type="entry name" value="DNase_II"/>
</dbReference>
<dbReference type="PANTHER" id="PTHR10858">
    <property type="entry name" value="DEOXYRIBONUCLEASE II"/>
    <property type="match status" value="1"/>
</dbReference>
<dbReference type="PANTHER" id="PTHR10858:SF23">
    <property type="entry name" value="DEOXYRIBONUCLEASE II"/>
    <property type="match status" value="1"/>
</dbReference>
<dbReference type="Pfam" id="PF03265">
    <property type="entry name" value="DNase_II"/>
    <property type="match status" value="1"/>
</dbReference>
<feature type="chain" id="PRO_0000230668" description="Putative deoxyribonuclease-2">
    <location>
        <begin position="1"/>
        <end position="350"/>
    </location>
</feature>
<protein>
    <recommendedName>
        <fullName>Putative deoxyribonuclease-2</fullName>
        <ecNumber>3.1.-.-</ecNumber>
    </recommendedName>
    <alternativeName>
        <fullName>Deoxyribonuclease II</fullName>
    </alternativeName>
</protein>
<organism>
    <name type="scientific">Burkholderia pseudomallei (strain 1710b)</name>
    <dbReference type="NCBI Taxonomy" id="320372"/>
    <lineage>
        <taxon>Bacteria</taxon>
        <taxon>Pseudomonadati</taxon>
        <taxon>Pseudomonadota</taxon>
        <taxon>Betaproteobacteria</taxon>
        <taxon>Burkholderiales</taxon>
        <taxon>Burkholderiaceae</taxon>
        <taxon>Burkholderia</taxon>
        <taxon>pseudomallei group</taxon>
    </lineage>
</organism>
<sequence length="350" mass="38837">MTISPRDEQNRSVDLWFAYKVPKLTKDTDSDSATGYEYVYYDREIGSVQKSPNRMNNPKGALFYTLDSIFGDPGSTTGWILYNDEMPADADRSNNATLGHTKGVIAFDIASNSALWLLHSWPKYTSPSAPGVPTPLYGQTFLCVSLDLETAGKIAAQMALHQQPQVYLPRTAGLDHASPLYTLTQPLNASAPGDSDSLDFKTRGGAPFKVIAKNRKWGKDFWNDLVGPTLKADMDVETWIRGKIPPILDSDGVHKTYDIKFIDLRKLGAPWAWPETQDHAKWGITTTDDWVCVGDINRMVTQEKRGGGTIAFQDPQLWKALSQTDLIVPPPGKTEAQARAMIHRTHQPAD</sequence>
<keyword id="KW-0255">Endonuclease</keyword>
<keyword id="KW-0378">Hydrolase</keyword>
<keyword id="KW-0540">Nuclease</keyword>